<keyword id="KW-0143">Chaperone</keyword>
<keyword id="KW-0963">Cytoplasm</keyword>
<keyword id="KW-0342">GTP-binding</keyword>
<keyword id="KW-0996">Nickel insertion</keyword>
<keyword id="KW-0547">Nucleotide-binding</keyword>
<keyword id="KW-1185">Reference proteome</keyword>
<organism>
    <name type="scientific">Burkholderia mallei (strain ATCC 23344)</name>
    <dbReference type="NCBI Taxonomy" id="243160"/>
    <lineage>
        <taxon>Bacteria</taxon>
        <taxon>Pseudomonadati</taxon>
        <taxon>Pseudomonadota</taxon>
        <taxon>Betaproteobacteria</taxon>
        <taxon>Burkholderiales</taxon>
        <taxon>Burkholderiaceae</taxon>
        <taxon>Burkholderia</taxon>
        <taxon>pseudomallei group</taxon>
    </lineage>
</organism>
<comment type="function">
    <text evidence="1">Facilitates the functional incorporation of the urease nickel metallocenter. This process requires GTP hydrolysis, probably effectuated by UreG.</text>
</comment>
<comment type="subunit">
    <text evidence="1">Homodimer. UreD, UreF and UreG form a complex that acts as a GTP-hydrolysis-dependent molecular chaperone, activating the urease apoprotein by helping to assemble the nickel containing metallocenter of UreC. The UreE protein probably delivers the nickel.</text>
</comment>
<comment type="subcellular location">
    <subcellularLocation>
        <location evidence="1">Cytoplasm</location>
    </subcellularLocation>
</comment>
<comment type="similarity">
    <text evidence="1">Belongs to the SIMIBI class G3E GTPase family. UreG subfamily.</text>
</comment>
<reference key="1">
    <citation type="journal article" date="2004" name="Proc. Natl. Acad. Sci. U.S.A.">
        <title>Structural flexibility in the Burkholderia mallei genome.</title>
        <authorList>
            <person name="Nierman W.C."/>
            <person name="DeShazer D."/>
            <person name="Kim H.S."/>
            <person name="Tettelin H."/>
            <person name="Nelson K.E."/>
            <person name="Feldblyum T.V."/>
            <person name="Ulrich R.L."/>
            <person name="Ronning C.M."/>
            <person name="Brinkac L.M."/>
            <person name="Daugherty S.C."/>
            <person name="Davidsen T.D."/>
            <person name="DeBoy R.T."/>
            <person name="Dimitrov G."/>
            <person name="Dodson R.J."/>
            <person name="Durkin A.S."/>
            <person name="Gwinn M.L."/>
            <person name="Haft D.H."/>
            <person name="Khouri H.M."/>
            <person name="Kolonay J.F."/>
            <person name="Madupu R."/>
            <person name="Mohammoud Y."/>
            <person name="Nelson W.C."/>
            <person name="Radune D."/>
            <person name="Romero C.M."/>
            <person name="Sarria S."/>
            <person name="Selengut J."/>
            <person name="Shamblin C."/>
            <person name="Sullivan S.A."/>
            <person name="White O."/>
            <person name="Yu Y."/>
            <person name="Zafar N."/>
            <person name="Zhou L."/>
            <person name="Fraser C.M."/>
        </authorList>
    </citation>
    <scope>NUCLEOTIDE SEQUENCE [LARGE SCALE GENOMIC DNA]</scope>
    <source>
        <strain>ATCC 23344</strain>
    </source>
</reference>
<evidence type="ECO:0000255" key="1">
    <source>
        <dbReference type="HAMAP-Rule" id="MF_01389"/>
    </source>
</evidence>
<sequence>MNAPRFAAPARRTKKLPPLRVGIGGPVGSGKTTLLEMLCKGMRERYDLVAITNDIYTKEDQRLLTIAGALPEARIMGVETGGCPHTAIREDASINLEAVERMLARFPDADIVFIESGGDNLAATFSPELSDLTIYVIDVAGGEKIPRKGGPGITKSDLLVINKTDLAPLVGANLEVMASDTRKMRGERPYVMCNLKALDGVADVIAFIENKGLLTV</sequence>
<proteinExistence type="inferred from homology"/>
<accession>Q62HR7</accession>
<feature type="chain" id="PRO_0000347370" description="Urease accessory protein UreG">
    <location>
        <begin position="1"/>
        <end position="216"/>
    </location>
</feature>
<feature type="binding site" evidence="1">
    <location>
        <begin position="25"/>
        <end position="32"/>
    </location>
    <ligand>
        <name>GTP</name>
        <dbReference type="ChEBI" id="CHEBI:37565"/>
    </ligand>
</feature>
<name>UREG_BURMA</name>
<gene>
    <name evidence="1" type="primary">ureG</name>
    <name type="ordered locus">BMA2187</name>
</gene>
<protein>
    <recommendedName>
        <fullName evidence="1">Urease accessory protein UreG</fullName>
    </recommendedName>
</protein>
<dbReference type="EMBL" id="CP000010">
    <property type="protein sequence ID" value="AAU50296.1"/>
    <property type="molecule type" value="Genomic_DNA"/>
</dbReference>
<dbReference type="RefSeq" id="WP_004185810.1">
    <property type="nucleotide sequence ID" value="NC_006348.1"/>
</dbReference>
<dbReference type="RefSeq" id="YP_103753.1">
    <property type="nucleotide sequence ID" value="NC_006348.1"/>
</dbReference>
<dbReference type="SMR" id="Q62HR7"/>
<dbReference type="DNASU" id="3089826"/>
<dbReference type="GeneID" id="92979890"/>
<dbReference type="KEGG" id="bma:BMA2187"/>
<dbReference type="PATRIC" id="fig|243160.12.peg.2256"/>
<dbReference type="eggNOG" id="COG0378">
    <property type="taxonomic scope" value="Bacteria"/>
</dbReference>
<dbReference type="HOGENOM" id="CLU_072144_1_0_4"/>
<dbReference type="Proteomes" id="UP000006693">
    <property type="component" value="Chromosome 1"/>
</dbReference>
<dbReference type="GO" id="GO:0005737">
    <property type="term" value="C:cytoplasm"/>
    <property type="evidence" value="ECO:0007669"/>
    <property type="project" value="UniProtKB-SubCell"/>
</dbReference>
<dbReference type="GO" id="GO:0005525">
    <property type="term" value="F:GTP binding"/>
    <property type="evidence" value="ECO:0007669"/>
    <property type="project" value="UniProtKB-KW"/>
</dbReference>
<dbReference type="GO" id="GO:0003924">
    <property type="term" value="F:GTPase activity"/>
    <property type="evidence" value="ECO:0007669"/>
    <property type="project" value="InterPro"/>
</dbReference>
<dbReference type="GO" id="GO:0016151">
    <property type="term" value="F:nickel cation binding"/>
    <property type="evidence" value="ECO:0007669"/>
    <property type="project" value="UniProtKB-UniRule"/>
</dbReference>
<dbReference type="GO" id="GO:0043419">
    <property type="term" value="P:urea catabolic process"/>
    <property type="evidence" value="ECO:0007669"/>
    <property type="project" value="InterPro"/>
</dbReference>
<dbReference type="CDD" id="cd05540">
    <property type="entry name" value="UreG"/>
    <property type="match status" value="1"/>
</dbReference>
<dbReference type="FunFam" id="3.40.50.300:FF:000208">
    <property type="entry name" value="Urease accessory protein UreG"/>
    <property type="match status" value="1"/>
</dbReference>
<dbReference type="Gene3D" id="3.40.50.300">
    <property type="entry name" value="P-loop containing nucleotide triphosphate hydrolases"/>
    <property type="match status" value="1"/>
</dbReference>
<dbReference type="HAMAP" id="MF_01389">
    <property type="entry name" value="UreG"/>
    <property type="match status" value="1"/>
</dbReference>
<dbReference type="InterPro" id="IPR003495">
    <property type="entry name" value="CobW/HypB/UreG_nucleotide-bd"/>
</dbReference>
<dbReference type="InterPro" id="IPR027417">
    <property type="entry name" value="P-loop_NTPase"/>
</dbReference>
<dbReference type="InterPro" id="IPR004400">
    <property type="entry name" value="UreG"/>
</dbReference>
<dbReference type="NCBIfam" id="TIGR00101">
    <property type="entry name" value="ureG"/>
    <property type="match status" value="1"/>
</dbReference>
<dbReference type="PANTHER" id="PTHR31715">
    <property type="entry name" value="UREASE ACCESSORY PROTEIN G"/>
    <property type="match status" value="1"/>
</dbReference>
<dbReference type="PANTHER" id="PTHR31715:SF0">
    <property type="entry name" value="UREASE ACCESSORY PROTEIN G"/>
    <property type="match status" value="1"/>
</dbReference>
<dbReference type="Pfam" id="PF02492">
    <property type="entry name" value="cobW"/>
    <property type="match status" value="1"/>
</dbReference>
<dbReference type="PIRSF" id="PIRSF005624">
    <property type="entry name" value="Ni-bind_GTPase"/>
    <property type="match status" value="1"/>
</dbReference>
<dbReference type="SUPFAM" id="SSF52540">
    <property type="entry name" value="P-loop containing nucleoside triphosphate hydrolases"/>
    <property type="match status" value="1"/>
</dbReference>